<accession>P20445</accession>
<accession>C8V605</accession>
<accession>P41763</accession>
<accession>Q5AUI9</accession>
<evidence type="ECO:0000250" key="1"/>
<evidence type="ECO:0000255" key="2">
    <source>
        <dbReference type="PROSITE-ProRule" id="PRU10009"/>
    </source>
</evidence>
<evidence type="ECO:0000269" key="3">
    <source>
    </source>
</evidence>
<evidence type="ECO:0000305" key="4"/>
<protein>
    <recommendedName>
        <fullName>Glyceraldehyde-3-phosphate dehydrogenase</fullName>
        <shortName>GAPDH</shortName>
        <ecNumber>1.2.1.12</ecNumber>
    </recommendedName>
</protein>
<sequence>MAPKVGINGFGRIGRIVFRNAIEAGTVDVVAVNDPFIETHYAAYMLKYDSQHGQFKGTIETYDEGLIVNGKKIRFHTERDPANIPWGQDGAEYIVESTGVFTTQEKASAHLKGGAKKVVISAPSADAPMFVMGVNNETYKKDIQVLSNASCTTNCLAPLAKVINDNFGIIEGLMTTVHSYTATQKVVDGPSAKDWRGGRTAATNIIPSSTGAAKAVGKVIPSLNGKLTGMAMRVPTSNVSVVDLTVRTEKAVTYDQIKDAVKKASENELKGILGYTEDDIVSTDLNGDTRSSIFDAKAGIALNSNFIKLVSWYDNEWGYSRRVVDLITYISKVDAQ</sequence>
<proteinExistence type="evidence at protein level"/>
<keyword id="KW-0963">Cytoplasm</keyword>
<keyword id="KW-0324">Glycolysis</keyword>
<keyword id="KW-0520">NAD</keyword>
<keyword id="KW-0560">Oxidoreductase</keyword>
<keyword id="KW-1185">Reference proteome</keyword>
<keyword id="KW-0346">Stress response</keyword>
<comment type="function">
    <text>Involved in osmoadaptation.</text>
</comment>
<comment type="catalytic activity">
    <reaction evidence="2">
        <text>D-glyceraldehyde 3-phosphate + phosphate + NAD(+) = (2R)-3-phospho-glyceroyl phosphate + NADH + H(+)</text>
        <dbReference type="Rhea" id="RHEA:10300"/>
        <dbReference type="ChEBI" id="CHEBI:15378"/>
        <dbReference type="ChEBI" id="CHEBI:43474"/>
        <dbReference type="ChEBI" id="CHEBI:57540"/>
        <dbReference type="ChEBI" id="CHEBI:57604"/>
        <dbReference type="ChEBI" id="CHEBI:57945"/>
        <dbReference type="ChEBI" id="CHEBI:59776"/>
        <dbReference type="EC" id="1.2.1.12"/>
    </reaction>
</comment>
<comment type="pathway">
    <text>Carbohydrate degradation; glycolysis; pyruvate from D-glyceraldehyde 3-phosphate: step 1/5.</text>
</comment>
<comment type="subunit">
    <text>Homotetramer.</text>
</comment>
<comment type="subcellular location">
    <subcellularLocation>
        <location>Cytoplasm</location>
    </subcellularLocation>
</comment>
<comment type="induction">
    <text evidence="3">Up-regulated when grown with elevated levels of potassium chloride.</text>
</comment>
<comment type="similarity">
    <text evidence="4">Belongs to the glyceraldehyde-3-phosphate dehydrogenase family.</text>
</comment>
<comment type="sequence caution" evidence="4">
    <conflict type="erroneous gene model prediction">
        <sequence resource="EMBL-CDS" id="EAA59663"/>
    </conflict>
</comment>
<organism>
    <name type="scientific">Emericella nidulans (strain FGSC A4 / ATCC 38163 / CBS 112.46 / NRRL 194 / M139)</name>
    <name type="common">Aspergillus nidulans</name>
    <dbReference type="NCBI Taxonomy" id="227321"/>
    <lineage>
        <taxon>Eukaryota</taxon>
        <taxon>Fungi</taxon>
        <taxon>Dikarya</taxon>
        <taxon>Ascomycota</taxon>
        <taxon>Pezizomycotina</taxon>
        <taxon>Eurotiomycetes</taxon>
        <taxon>Eurotiomycetidae</taxon>
        <taxon>Eurotiales</taxon>
        <taxon>Aspergillaceae</taxon>
        <taxon>Aspergillus</taxon>
        <taxon>Aspergillus subgen. Nidulantes</taxon>
    </lineage>
</organism>
<dbReference type="EC" id="1.2.1.12"/>
<dbReference type="EMBL" id="M19694">
    <property type="protein sequence ID" value="AAA33307.1"/>
    <property type="molecule type" value="Genomic_DNA"/>
</dbReference>
<dbReference type="EMBL" id="M33539">
    <property type="protein sequence ID" value="AAA33308.1"/>
    <property type="molecule type" value="Genomic_DNA"/>
</dbReference>
<dbReference type="EMBL" id="AACD01000139">
    <property type="protein sequence ID" value="EAA59663.1"/>
    <property type="status" value="ALT_SEQ"/>
    <property type="molecule type" value="Genomic_DNA"/>
</dbReference>
<dbReference type="EMBL" id="BN001302">
    <property type="protein sequence ID" value="CBF73760.1"/>
    <property type="molecule type" value="Genomic_DNA"/>
</dbReference>
<dbReference type="PIR" id="JT0344">
    <property type="entry name" value="DEASG3"/>
</dbReference>
<dbReference type="RefSeq" id="XP_681310.1">
    <property type="nucleotide sequence ID" value="XM_676218.1"/>
</dbReference>
<dbReference type="SMR" id="P20445"/>
<dbReference type="FunCoup" id="P20445">
    <property type="interactions" value="1134"/>
</dbReference>
<dbReference type="STRING" id="227321.P20445"/>
<dbReference type="EnsemblFungi" id="CBF73760">
    <property type="protein sequence ID" value="CBF73760"/>
    <property type="gene ID" value="ANIA_08041"/>
</dbReference>
<dbReference type="VEuPathDB" id="FungiDB:AN8041"/>
<dbReference type="eggNOG" id="KOG0657">
    <property type="taxonomic scope" value="Eukaryota"/>
</dbReference>
<dbReference type="HOGENOM" id="CLU_030140_0_1_1"/>
<dbReference type="InParanoid" id="P20445"/>
<dbReference type="OMA" id="YGYTCNM"/>
<dbReference type="OrthoDB" id="1152826at2759"/>
<dbReference type="SABIO-RK" id="P20445"/>
<dbReference type="UniPathway" id="UPA00109">
    <property type="reaction ID" value="UER00184"/>
</dbReference>
<dbReference type="Proteomes" id="UP000000560">
    <property type="component" value="Chromosome II"/>
</dbReference>
<dbReference type="GO" id="GO:0005829">
    <property type="term" value="C:cytosol"/>
    <property type="evidence" value="ECO:0000318"/>
    <property type="project" value="GO_Central"/>
</dbReference>
<dbReference type="GO" id="GO:0004365">
    <property type="term" value="F:glyceraldehyde-3-phosphate dehydrogenase (NAD+) (phosphorylating) activity"/>
    <property type="evidence" value="ECO:0000315"/>
    <property type="project" value="AspGD"/>
</dbReference>
<dbReference type="GO" id="GO:0051287">
    <property type="term" value="F:NAD binding"/>
    <property type="evidence" value="ECO:0007669"/>
    <property type="project" value="InterPro"/>
</dbReference>
<dbReference type="GO" id="GO:0050661">
    <property type="term" value="F:NADP binding"/>
    <property type="evidence" value="ECO:0007669"/>
    <property type="project" value="InterPro"/>
</dbReference>
<dbReference type="GO" id="GO:0071470">
    <property type="term" value="P:cellular response to osmotic stress"/>
    <property type="evidence" value="ECO:0000270"/>
    <property type="project" value="AspGD"/>
</dbReference>
<dbReference type="GO" id="GO:0006094">
    <property type="term" value="P:gluconeogenesis"/>
    <property type="evidence" value="ECO:0000247"/>
    <property type="project" value="AspGD"/>
</dbReference>
<dbReference type="GO" id="GO:0006096">
    <property type="term" value="P:glycolytic process"/>
    <property type="evidence" value="ECO:0000247"/>
    <property type="project" value="AspGD"/>
</dbReference>
<dbReference type="CDD" id="cd18126">
    <property type="entry name" value="GAPDH_I_C"/>
    <property type="match status" value="1"/>
</dbReference>
<dbReference type="CDD" id="cd05214">
    <property type="entry name" value="GAPDH_I_N"/>
    <property type="match status" value="1"/>
</dbReference>
<dbReference type="FunFam" id="3.30.360.10:FF:000001">
    <property type="entry name" value="Glyceraldehyde-3-phosphate dehydrogenase"/>
    <property type="match status" value="1"/>
</dbReference>
<dbReference type="FunFam" id="3.40.50.720:FF:000020">
    <property type="entry name" value="Glyceraldehyde-3-phosphate dehydrogenase"/>
    <property type="match status" value="1"/>
</dbReference>
<dbReference type="Gene3D" id="3.30.360.10">
    <property type="entry name" value="Dihydrodipicolinate Reductase, domain 2"/>
    <property type="match status" value="1"/>
</dbReference>
<dbReference type="Gene3D" id="3.40.50.720">
    <property type="entry name" value="NAD(P)-binding Rossmann-like Domain"/>
    <property type="match status" value="1"/>
</dbReference>
<dbReference type="InterPro" id="IPR020831">
    <property type="entry name" value="GlycerAld/Erythrose_P_DH"/>
</dbReference>
<dbReference type="InterPro" id="IPR020830">
    <property type="entry name" value="GlycerAld_3-P_DH_AS"/>
</dbReference>
<dbReference type="InterPro" id="IPR020829">
    <property type="entry name" value="GlycerAld_3-P_DH_cat"/>
</dbReference>
<dbReference type="InterPro" id="IPR020828">
    <property type="entry name" value="GlycerAld_3-P_DH_NAD(P)-bd"/>
</dbReference>
<dbReference type="InterPro" id="IPR006424">
    <property type="entry name" value="Glyceraldehyde-3-P_DH_1"/>
</dbReference>
<dbReference type="InterPro" id="IPR036291">
    <property type="entry name" value="NAD(P)-bd_dom_sf"/>
</dbReference>
<dbReference type="NCBIfam" id="TIGR01534">
    <property type="entry name" value="GAPDH-I"/>
    <property type="match status" value="1"/>
</dbReference>
<dbReference type="PANTHER" id="PTHR10836">
    <property type="entry name" value="GLYCERALDEHYDE 3-PHOSPHATE DEHYDROGENASE"/>
    <property type="match status" value="1"/>
</dbReference>
<dbReference type="PANTHER" id="PTHR10836:SF76">
    <property type="entry name" value="GLYCERALDEHYDE-3-PHOSPHATE DEHYDROGENASE-RELATED"/>
    <property type="match status" value="1"/>
</dbReference>
<dbReference type="Pfam" id="PF02800">
    <property type="entry name" value="Gp_dh_C"/>
    <property type="match status" value="1"/>
</dbReference>
<dbReference type="Pfam" id="PF00044">
    <property type="entry name" value="Gp_dh_N"/>
    <property type="match status" value="1"/>
</dbReference>
<dbReference type="PIRSF" id="PIRSF000149">
    <property type="entry name" value="GAP_DH"/>
    <property type="match status" value="1"/>
</dbReference>
<dbReference type="PRINTS" id="PR00078">
    <property type="entry name" value="G3PDHDRGNASE"/>
</dbReference>
<dbReference type="SMART" id="SM00846">
    <property type="entry name" value="Gp_dh_N"/>
    <property type="match status" value="1"/>
</dbReference>
<dbReference type="SUPFAM" id="SSF55347">
    <property type="entry name" value="Glyceraldehyde-3-phosphate dehydrogenase-like, C-terminal domain"/>
    <property type="match status" value="1"/>
</dbReference>
<dbReference type="SUPFAM" id="SSF51735">
    <property type="entry name" value="NAD(P)-binding Rossmann-fold domains"/>
    <property type="match status" value="1"/>
</dbReference>
<dbReference type="PROSITE" id="PS00071">
    <property type="entry name" value="GAPDH"/>
    <property type="match status" value="1"/>
</dbReference>
<name>G3P_EMENI</name>
<reference key="1">
    <citation type="journal article" date="1988" name="Gene">
        <title>Isolation and characterization of the glyceraldehyde-3-phosphate dehydrogenase gene of Aspergillus nidulans.</title>
        <authorList>
            <person name="Punt P.J."/>
            <person name="Dingemanse M.A."/>
            <person name="Jacobs-Meijsing B.J.M."/>
            <person name="Pouwels P.H."/>
            <person name="van den Hondel C.A.M.J.J."/>
        </authorList>
    </citation>
    <scope>NUCLEOTIDE SEQUENCE [GENOMIC DNA]</scope>
</reference>
<reference key="2">
    <citation type="journal article" date="1990" name="Gene">
        <title>Functional elements in the promoter region of the Aspergillus nidulans gpdA gene encoding glyceraldehyde-3-phosphate dehydrogenase.</title>
        <authorList>
            <person name="Punt P.J."/>
            <person name="Dingemanse M.A."/>
            <person name="Kuyvenhoven A."/>
            <person name="Soede R.D."/>
            <person name="Pouwels P.H."/>
            <person name="van den Hondel C.A.M.J.J."/>
        </authorList>
    </citation>
    <scope>NUCLEOTIDE SEQUENCE [GENOMIC DNA]</scope>
</reference>
<reference key="3">
    <citation type="journal article" date="2005" name="Nature">
        <title>Sequencing of Aspergillus nidulans and comparative analysis with A. fumigatus and A. oryzae.</title>
        <authorList>
            <person name="Galagan J.E."/>
            <person name="Calvo S.E."/>
            <person name="Cuomo C."/>
            <person name="Ma L.-J."/>
            <person name="Wortman J.R."/>
            <person name="Batzoglou S."/>
            <person name="Lee S.-I."/>
            <person name="Bastuerkmen M."/>
            <person name="Spevak C.C."/>
            <person name="Clutterbuck J."/>
            <person name="Kapitonov V."/>
            <person name="Jurka J."/>
            <person name="Scazzocchio C."/>
            <person name="Farman M.L."/>
            <person name="Butler J."/>
            <person name="Purcell S."/>
            <person name="Harris S."/>
            <person name="Braus G.H."/>
            <person name="Draht O."/>
            <person name="Busch S."/>
            <person name="D'Enfert C."/>
            <person name="Bouchier C."/>
            <person name="Goldman G.H."/>
            <person name="Bell-Pedersen D."/>
            <person name="Griffiths-Jones S."/>
            <person name="Doonan J.H."/>
            <person name="Yu J."/>
            <person name="Vienken K."/>
            <person name="Pain A."/>
            <person name="Freitag M."/>
            <person name="Selker E.U."/>
            <person name="Archer D.B."/>
            <person name="Penalva M.A."/>
            <person name="Oakley B.R."/>
            <person name="Momany M."/>
            <person name="Tanaka T."/>
            <person name="Kumagai T."/>
            <person name="Asai K."/>
            <person name="Machida M."/>
            <person name="Nierman W.C."/>
            <person name="Denning D.W."/>
            <person name="Caddick M.X."/>
            <person name="Hynes M."/>
            <person name="Paoletti M."/>
            <person name="Fischer R."/>
            <person name="Miller B.L."/>
            <person name="Dyer P.S."/>
            <person name="Sachs M.S."/>
            <person name="Osmani S.A."/>
            <person name="Birren B.W."/>
        </authorList>
    </citation>
    <scope>NUCLEOTIDE SEQUENCE [LARGE SCALE GENOMIC DNA]</scope>
    <source>
        <strain>FGSC A4 / ATCC 38163 / CBS 112.46 / NRRL 194 / M139</strain>
    </source>
</reference>
<reference key="4">
    <citation type="journal article" date="2009" name="Fungal Genet. Biol.">
        <title>The 2008 update of the Aspergillus nidulans genome annotation: a community effort.</title>
        <authorList>
            <person name="Wortman J.R."/>
            <person name="Gilsenan J.M."/>
            <person name="Joardar V."/>
            <person name="Deegan J."/>
            <person name="Clutterbuck J."/>
            <person name="Andersen M.R."/>
            <person name="Archer D."/>
            <person name="Bencina M."/>
            <person name="Braus G."/>
            <person name="Coutinho P."/>
            <person name="von Dohren H."/>
            <person name="Doonan J."/>
            <person name="Driessen A.J."/>
            <person name="Durek P."/>
            <person name="Espeso E."/>
            <person name="Fekete E."/>
            <person name="Flipphi M."/>
            <person name="Estrada C.G."/>
            <person name="Geysens S."/>
            <person name="Goldman G."/>
            <person name="de Groot P.W."/>
            <person name="Hansen K."/>
            <person name="Harris S.D."/>
            <person name="Heinekamp T."/>
            <person name="Helmstaedt K."/>
            <person name="Henrissat B."/>
            <person name="Hofmann G."/>
            <person name="Homan T."/>
            <person name="Horio T."/>
            <person name="Horiuchi H."/>
            <person name="James S."/>
            <person name="Jones M."/>
            <person name="Karaffa L."/>
            <person name="Karanyi Z."/>
            <person name="Kato M."/>
            <person name="Keller N."/>
            <person name="Kelly D.E."/>
            <person name="Kiel J.A."/>
            <person name="Kim J.M."/>
            <person name="van der Klei I.J."/>
            <person name="Klis F.M."/>
            <person name="Kovalchuk A."/>
            <person name="Krasevec N."/>
            <person name="Kubicek C.P."/>
            <person name="Liu B."/>
            <person name="Maccabe A."/>
            <person name="Meyer V."/>
            <person name="Mirabito P."/>
            <person name="Miskei M."/>
            <person name="Mos M."/>
            <person name="Mullins J."/>
            <person name="Nelson D.R."/>
            <person name="Nielsen J."/>
            <person name="Oakley B.R."/>
            <person name="Osmani S.A."/>
            <person name="Pakula T."/>
            <person name="Paszewski A."/>
            <person name="Paulsen I."/>
            <person name="Pilsyk S."/>
            <person name="Pocsi I."/>
            <person name="Punt P.J."/>
            <person name="Ram A.F."/>
            <person name="Ren Q."/>
            <person name="Robellet X."/>
            <person name="Robson G."/>
            <person name="Seiboth B."/>
            <person name="van Solingen P."/>
            <person name="Specht T."/>
            <person name="Sun J."/>
            <person name="Taheri-Talesh N."/>
            <person name="Takeshita N."/>
            <person name="Ussery D."/>
            <person name="vanKuyk P.A."/>
            <person name="Visser H."/>
            <person name="van de Vondervoort P.J."/>
            <person name="de Vries R.P."/>
            <person name="Walton J."/>
            <person name="Xiang X."/>
            <person name="Xiong Y."/>
            <person name="Zeng A.P."/>
            <person name="Brandt B.W."/>
            <person name="Cornell M.J."/>
            <person name="van den Hondel C.A."/>
            <person name="Visser J."/>
            <person name="Oliver S.G."/>
            <person name="Turner G."/>
        </authorList>
    </citation>
    <scope>GENOME REANNOTATION</scope>
    <source>
        <strain>FGSC A4 / ATCC 38163 / CBS 112.46 / NRRL 194 / M139</strain>
    </source>
</reference>
<reference key="5">
    <citation type="journal article" date="2007" name="Fungal Genet. Biol.">
        <title>Proteome map of Aspergillus nidulans during osmoadaptation.</title>
        <authorList>
            <person name="Kim Y."/>
            <person name="Nandakumar M.P."/>
            <person name="Marten M.R."/>
        </authorList>
    </citation>
    <scope>INDUCTION</scope>
    <scope>IDENTIFICATION BY MASS SPECTROMETRY</scope>
</reference>
<feature type="chain" id="PRO_0000145554" description="Glyceraldehyde-3-phosphate dehydrogenase">
    <location>
        <begin position="1"/>
        <end position="336"/>
    </location>
</feature>
<feature type="active site" description="Nucleophile" evidence="2">
    <location>
        <position position="151"/>
    </location>
</feature>
<feature type="binding site" evidence="1">
    <location>
        <begin position="12"/>
        <end position="13"/>
    </location>
    <ligand>
        <name>NAD(+)</name>
        <dbReference type="ChEBI" id="CHEBI:57540"/>
    </ligand>
</feature>
<feature type="binding site" evidence="1">
    <location>
        <position position="34"/>
    </location>
    <ligand>
        <name>NAD(+)</name>
        <dbReference type="ChEBI" id="CHEBI:57540"/>
    </ligand>
</feature>
<feature type="binding site" evidence="1">
    <location>
        <position position="79"/>
    </location>
    <ligand>
        <name>NAD(+)</name>
        <dbReference type="ChEBI" id="CHEBI:57540"/>
    </ligand>
</feature>
<feature type="binding site" evidence="1">
    <location>
        <begin position="150"/>
        <end position="152"/>
    </location>
    <ligand>
        <name>D-glyceraldehyde 3-phosphate</name>
        <dbReference type="ChEBI" id="CHEBI:59776"/>
    </ligand>
</feature>
<feature type="binding site" evidence="1">
    <location>
        <position position="181"/>
    </location>
    <ligand>
        <name>D-glyceraldehyde 3-phosphate</name>
        <dbReference type="ChEBI" id="CHEBI:59776"/>
    </ligand>
</feature>
<feature type="binding site" evidence="1">
    <location>
        <begin position="210"/>
        <end position="211"/>
    </location>
    <ligand>
        <name>D-glyceraldehyde 3-phosphate</name>
        <dbReference type="ChEBI" id="CHEBI:59776"/>
    </ligand>
</feature>
<feature type="binding site" evidence="1">
    <location>
        <position position="233"/>
    </location>
    <ligand>
        <name>D-glyceraldehyde 3-phosphate</name>
        <dbReference type="ChEBI" id="CHEBI:59776"/>
    </ligand>
</feature>
<feature type="binding site" evidence="1">
    <location>
        <position position="315"/>
    </location>
    <ligand>
        <name>NAD(+)</name>
        <dbReference type="ChEBI" id="CHEBI:57540"/>
    </ligand>
</feature>
<feature type="site" description="Activates thiol group during catalysis" evidence="1">
    <location>
        <position position="178"/>
    </location>
</feature>
<gene>
    <name type="primary">gpdA</name>
    <name type="ORF">AN8041</name>
</gene>